<reference key="1">
    <citation type="journal article" date="2004" name="Nucleic Acids Res.">
        <title>Unique features revealed by the genome sequence of Acinetobacter sp. ADP1, a versatile and naturally transformation competent bacterium.</title>
        <authorList>
            <person name="Barbe V."/>
            <person name="Vallenet D."/>
            <person name="Fonknechten N."/>
            <person name="Kreimeyer A."/>
            <person name="Oztas S."/>
            <person name="Labarre L."/>
            <person name="Cruveiller S."/>
            <person name="Robert C."/>
            <person name="Duprat S."/>
            <person name="Wincker P."/>
            <person name="Ornston L.N."/>
            <person name="Weissenbach J."/>
            <person name="Marliere P."/>
            <person name="Cohen G.N."/>
            <person name="Medigue C."/>
        </authorList>
    </citation>
    <scope>NUCLEOTIDE SEQUENCE [LARGE SCALE GENOMIC DNA]</scope>
    <source>
        <strain>ATCC 33305 / BD413 / ADP1</strain>
    </source>
</reference>
<organism>
    <name type="scientific">Acinetobacter baylyi (strain ATCC 33305 / BD413 / ADP1)</name>
    <dbReference type="NCBI Taxonomy" id="62977"/>
    <lineage>
        <taxon>Bacteria</taxon>
        <taxon>Pseudomonadati</taxon>
        <taxon>Pseudomonadota</taxon>
        <taxon>Gammaproteobacteria</taxon>
        <taxon>Moraxellales</taxon>
        <taxon>Moraxellaceae</taxon>
        <taxon>Acinetobacter</taxon>
    </lineage>
</organism>
<dbReference type="EC" id="2.1.1.107" evidence="1"/>
<dbReference type="EC" id="1.3.1.76" evidence="1"/>
<dbReference type="EC" id="4.99.1.4" evidence="1"/>
<dbReference type="EMBL" id="CR543861">
    <property type="protein sequence ID" value="CAG69649.1"/>
    <property type="molecule type" value="Genomic_DNA"/>
</dbReference>
<dbReference type="RefSeq" id="WP_004929508.1">
    <property type="nucleotide sequence ID" value="NC_005966.1"/>
</dbReference>
<dbReference type="SMR" id="Q6F8G6"/>
<dbReference type="STRING" id="202950.GCA_001485005_02876"/>
<dbReference type="GeneID" id="45235164"/>
<dbReference type="KEGG" id="aci:ACIAD2934"/>
<dbReference type="eggNOG" id="COG0007">
    <property type="taxonomic scope" value="Bacteria"/>
</dbReference>
<dbReference type="eggNOG" id="COG1648">
    <property type="taxonomic scope" value="Bacteria"/>
</dbReference>
<dbReference type="HOGENOM" id="CLU_011276_2_0_6"/>
<dbReference type="OrthoDB" id="9815856at2"/>
<dbReference type="BioCyc" id="ASP62977:ACIAD_RS13245-MONOMER"/>
<dbReference type="UniPathway" id="UPA00148">
    <property type="reaction ID" value="UER00211"/>
</dbReference>
<dbReference type="UniPathway" id="UPA00148">
    <property type="reaction ID" value="UER00222"/>
</dbReference>
<dbReference type="UniPathway" id="UPA00262">
    <property type="reaction ID" value="UER00211"/>
</dbReference>
<dbReference type="UniPathway" id="UPA00262">
    <property type="reaction ID" value="UER00222"/>
</dbReference>
<dbReference type="UniPathway" id="UPA00262">
    <property type="reaction ID" value="UER00376"/>
</dbReference>
<dbReference type="Proteomes" id="UP000000430">
    <property type="component" value="Chromosome"/>
</dbReference>
<dbReference type="GO" id="GO:0051287">
    <property type="term" value="F:NAD binding"/>
    <property type="evidence" value="ECO:0007669"/>
    <property type="project" value="InterPro"/>
</dbReference>
<dbReference type="GO" id="GO:0043115">
    <property type="term" value="F:precorrin-2 dehydrogenase activity"/>
    <property type="evidence" value="ECO:0007669"/>
    <property type="project" value="UniProtKB-UniRule"/>
</dbReference>
<dbReference type="GO" id="GO:0051266">
    <property type="term" value="F:sirohydrochlorin ferrochelatase activity"/>
    <property type="evidence" value="ECO:0007669"/>
    <property type="project" value="UniProtKB-EC"/>
</dbReference>
<dbReference type="GO" id="GO:0004851">
    <property type="term" value="F:uroporphyrin-III C-methyltransferase activity"/>
    <property type="evidence" value="ECO:0007669"/>
    <property type="project" value="UniProtKB-UniRule"/>
</dbReference>
<dbReference type="GO" id="GO:0009236">
    <property type="term" value="P:cobalamin biosynthetic process"/>
    <property type="evidence" value="ECO:0007669"/>
    <property type="project" value="UniProtKB-UniRule"/>
</dbReference>
<dbReference type="GO" id="GO:0032259">
    <property type="term" value="P:methylation"/>
    <property type="evidence" value="ECO:0007669"/>
    <property type="project" value="UniProtKB-KW"/>
</dbReference>
<dbReference type="GO" id="GO:0019354">
    <property type="term" value="P:siroheme biosynthetic process"/>
    <property type="evidence" value="ECO:0007669"/>
    <property type="project" value="UniProtKB-UniRule"/>
</dbReference>
<dbReference type="CDD" id="cd11642">
    <property type="entry name" value="SUMT"/>
    <property type="match status" value="1"/>
</dbReference>
<dbReference type="FunFam" id="3.30.950.10:FF:000001">
    <property type="entry name" value="Siroheme synthase"/>
    <property type="match status" value="1"/>
</dbReference>
<dbReference type="FunFam" id="3.40.1010.10:FF:000001">
    <property type="entry name" value="Siroheme synthase"/>
    <property type="match status" value="1"/>
</dbReference>
<dbReference type="Gene3D" id="3.40.1010.10">
    <property type="entry name" value="Cobalt-precorrin-4 Transmethylase, Domain 1"/>
    <property type="match status" value="1"/>
</dbReference>
<dbReference type="Gene3D" id="3.30.950.10">
    <property type="entry name" value="Methyltransferase, Cobalt-precorrin-4 Transmethylase, Domain 2"/>
    <property type="match status" value="1"/>
</dbReference>
<dbReference type="Gene3D" id="3.40.50.720">
    <property type="entry name" value="NAD(P)-binding Rossmann-like Domain"/>
    <property type="match status" value="1"/>
</dbReference>
<dbReference type="Gene3D" id="1.10.8.210">
    <property type="entry name" value="Sirohaem synthase, dimerisation domain"/>
    <property type="match status" value="1"/>
</dbReference>
<dbReference type="Gene3D" id="3.30.160.110">
    <property type="entry name" value="Siroheme synthase, domain 2"/>
    <property type="match status" value="1"/>
</dbReference>
<dbReference type="HAMAP" id="MF_01646">
    <property type="entry name" value="Siroheme_synth"/>
    <property type="match status" value="1"/>
</dbReference>
<dbReference type="InterPro" id="IPR000878">
    <property type="entry name" value="4pyrrol_Mease"/>
</dbReference>
<dbReference type="InterPro" id="IPR035996">
    <property type="entry name" value="4pyrrol_Methylase_sf"/>
</dbReference>
<dbReference type="InterPro" id="IPR014777">
    <property type="entry name" value="4pyrrole_Mease_sub1"/>
</dbReference>
<dbReference type="InterPro" id="IPR014776">
    <property type="entry name" value="4pyrrole_Mease_sub2"/>
</dbReference>
<dbReference type="InterPro" id="IPR006366">
    <property type="entry name" value="CobA/CysG_C"/>
</dbReference>
<dbReference type="InterPro" id="IPR036291">
    <property type="entry name" value="NAD(P)-bd_dom_sf"/>
</dbReference>
<dbReference type="InterPro" id="IPR050161">
    <property type="entry name" value="Siro_Cobalamin_biosynth"/>
</dbReference>
<dbReference type="InterPro" id="IPR037115">
    <property type="entry name" value="Sirohaem_synt_dimer_dom_sf"/>
</dbReference>
<dbReference type="InterPro" id="IPR012409">
    <property type="entry name" value="Sirohaem_synth"/>
</dbReference>
<dbReference type="InterPro" id="IPR028281">
    <property type="entry name" value="Sirohaem_synthase_central"/>
</dbReference>
<dbReference type="InterPro" id="IPR019478">
    <property type="entry name" value="Sirohaem_synthase_dimer_dom"/>
</dbReference>
<dbReference type="InterPro" id="IPR006367">
    <property type="entry name" value="Sirohaem_synthase_N"/>
</dbReference>
<dbReference type="InterPro" id="IPR003043">
    <property type="entry name" value="Uropor_MeTrfase_CS"/>
</dbReference>
<dbReference type="NCBIfam" id="TIGR01469">
    <property type="entry name" value="cobA_cysG_Cterm"/>
    <property type="match status" value="1"/>
</dbReference>
<dbReference type="NCBIfam" id="TIGR01470">
    <property type="entry name" value="cysG_Nterm"/>
    <property type="match status" value="1"/>
</dbReference>
<dbReference type="NCBIfam" id="NF004790">
    <property type="entry name" value="PRK06136.1"/>
    <property type="match status" value="1"/>
</dbReference>
<dbReference type="NCBIfam" id="NF007922">
    <property type="entry name" value="PRK10637.1"/>
    <property type="match status" value="1"/>
</dbReference>
<dbReference type="PANTHER" id="PTHR45790:SF1">
    <property type="entry name" value="SIROHEME SYNTHASE"/>
    <property type="match status" value="1"/>
</dbReference>
<dbReference type="PANTHER" id="PTHR45790">
    <property type="entry name" value="SIROHEME SYNTHASE-RELATED"/>
    <property type="match status" value="1"/>
</dbReference>
<dbReference type="Pfam" id="PF10414">
    <property type="entry name" value="CysG_dimeriser"/>
    <property type="match status" value="1"/>
</dbReference>
<dbReference type="Pfam" id="PF13241">
    <property type="entry name" value="NAD_binding_7"/>
    <property type="match status" value="1"/>
</dbReference>
<dbReference type="Pfam" id="PF14824">
    <property type="entry name" value="Sirohm_synth_M"/>
    <property type="match status" value="1"/>
</dbReference>
<dbReference type="Pfam" id="PF00590">
    <property type="entry name" value="TP_methylase"/>
    <property type="match status" value="1"/>
</dbReference>
<dbReference type="PIRSF" id="PIRSF036426">
    <property type="entry name" value="Sirohaem_synth"/>
    <property type="match status" value="1"/>
</dbReference>
<dbReference type="SUPFAM" id="SSF51735">
    <property type="entry name" value="NAD(P)-binding Rossmann-fold domains"/>
    <property type="match status" value="1"/>
</dbReference>
<dbReference type="SUPFAM" id="SSF75615">
    <property type="entry name" value="Siroheme synthase middle domains-like"/>
    <property type="match status" value="1"/>
</dbReference>
<dbReference type="SUPFAM" id="SSF53790">
    <property type="entry name" value="Tetrapyrrole methylase"/>
    <property type="match status" value="1"/>
</dbReference>
<dbReference type="PROSITE" id="PS00839">
    <property type="entry name" value="SUMT_1"/>
    <property type="match status" value="1"/>
</dbReference>
<dbReference type="PROSITE" id="PS00840">
    <property type="entry name" value="SUMT_2"/>
    <property type="match status" value="1"/>
</dbReference>
<proteinExistence type="inferred from homology"/>
<evidence type="ECO:0000255" key="1">
    <source>
        <dbReference type="HAMAP-Rule" id="MF_01646"/>
    </source>
</evidence>
<keyword id="KW-0169">Cobalamin biosynthesis</keyword>
<keyword id="KW-0456">Lyase</keyword>
<keyword id="KW-0489">Methyltransferase</keyword>
<keyword id="KW-0511">Multifunctional enzyme</keyword>
<keyword id="KW-0520">NAD</keyword>
<keyword id="KW-0560">Oxidoreductase</keyword>
<keyword id="KW-0597">Phosphoprotein</keyword>
<keyword id="KW-0627">Porphyrin biosynthesis</keyword>
<keyword id="KW-0949">S-adenosyl-L-methionine</keyword>
<keyword id="KW-0808">Transferase</keyword>
<accession>Q6F8G6</accession>
<comment type="function">
    <text evidence="1">Multifunctional enzyme that catalyzes the SAM-dependent methylations of uroporphyrinogen III at position C-2 and C-7 to form precorrin-2 via precorrin-1. Then it catalyzes the NAD-dependent ring dehydrogenation of precorrin-2 to yield sirohydrochlorin. Finally, it catalyzes the ferrochelation of sirohydrochlorin to yield siroheme.</text>
</comment>
<comment type="catalytic activity">
    <reaction evidence="1">
        <text>uroporphyrinogen III + 2 S-adenosyl-L-methionine = precorrin-2 + 2 S-adenosyl-L-homocysteine + H(+)</text>
        <dbReference type="Rhea" id="RHEA:32459"/>
        <dbReference type="ChEBI" id="CHEBI:15378"/>
        <dbReference type="ChEBI" id="CHEBI:57308"/>
        <dbReference type="ChEBI" id="CHEBI:57856"/>
        <dbReference type="ChEBI" id="CHEBI:58827"/>
        <dbReference type="ChEBI" id="CHEBI:59789"/>
        <dbReference type="EC" id="2.1.1.107"/>
    </reaction>
</comment>
<comment type="catalytic activity">
    <reaction evidence="1">
        <text>precorrin-2 + NAD(+) = sirohydrochlorin + NADH + 2 H(+)</text>
        <dbReference type="Rhea" id="RHEA:15613"/>
        <dbReference type="ChEBI" id="CHEBI:15378"/>
        <dbReference type="ChEBI" id="CHEBI:57540"/>
        <dbReference type="ChEBI" id="CHEBI:57945"/>
        <dbReference type="ChEBI" id="CHEBI:58351"/>
        <dbReference type="ChEBI" id="CHEBI:58827"/>
        <dbReference type="EC" id="1.3.1.76"/>
    </reaction>
</comment>
<comment type="catalytic activity">
    <reaction evidence="1">
        <text>siroheme + 2 H(+) = sirohydrochlorin + Fe(2+)</text>
        <dbReference type="Rhea" id="RHEA:24360"/>
        <dbReference type="ChEBI" id="CHEBI:15378"/>
        <dbReference type="ChEBI" id="CHEBI:29033"/>
        <dbReference type="ChEBI" id="CHEBI:58351"/>
        <dbReference type="ChEBI" id="CHEBI:60052"/>
        <dbReference type="EC" id="4.99.1.4"/>
    </reaction>
</comment>
<comment type="pathway">
    <text evidence="1">Cofactor biosynthesis; adenosylcobalamin biosynthesis; precorrin-2 from uroporphyrinogen III: step 1/1.</text>
</comment>
<comment type="pathway">
    <text evidence="1">Cofactor biosynthesis; adenosylcobalamin biosynthesis; sirohydrochlorin from precorrin-2: step 1/1.</text>
</comment>
<comment type="pathway">
    <text evidence="1">Porphyrin-containing compound metabolism; siroheme biosynthesis; precorrin-2 from uroporphyrinogen III: step 1/1.</text>
</comment>
<comment type="pathway">
    <text evidence="1">Porphyrin-containing compound metabolism; siroheme biosynthesis; siroheme from sirohydrochlorin: step 1/1.</text>
</comment>
<comment type="pathway">
    <text evidence="1">Porphyrin-containing compound metabolism; siroheme biosynthesis; sirohydrochlorin from precorrin-2: step 1/1.</text>
</comment>
<comment type="similarity">
    <text evidence="1">In the N-terminal section; belongs to the precorrin-2 dehydrogenase / sirohydrochlorin ferrochelatase family.</text>
</comment>
<comment type="similarity">
    <text evidence="1">In the C-terminal section; belongs to the precorrin methyltransferase family.</text>
</comment>
<feature type="chain" id="PRO_0000330484" description="Siroheme synthase">
    <location>
        <begin position="1"/>
        <end position="457"/>
    </location>
</feature>
<feature type="region of interest" description="Precorrin-2 dehydrogenase /sirohydrochlorin ferrochelatase" evidence="1">
    <location>
        <begin position="1"/>
        <end position="204"/>
    </location>
</feature>
<feature type="region of interest" description="Uroporphyrinogen-III C-methyltransferase" evidence="1">
    <location>
        <begin position="216"/>
        <end position="457"/>
    </location>
</feature>
<feature type="active site" description="Proton acceptor" evidence="1">
    <location>
        <position position="248"/>
    </location>
</feature>
<feature type="active site" description="Proton donor" evidence="1">
    <location>
        <position position="270"/>
    </location>
</feature>
<feature type="binding site" evidence="1">
    <location>
        <begin position="22"/>
        <end position="23"/>
    </location>
    <ligand>
        <name>NAD(+)</name>
        <dbReference type="ChEBI" id="CHEBI:57540"/>
    </ligand>
</feature>
<feature type="binding site" evidence="1">
    <location>
        <begin position="43"/>
        <end position="44"/>
    </location>
    <ligand>
        <name>NAD(+)</name>
        <dbReference type="ChEBI" id="CHEBI:57540"/>
    </ligand>
</feature>
<feature type="binding site" evidence="1">
    <location>
        <position position="225"/>
    </location>
    <ligand>
        <name>S-adenosyl-L-methionine</name>
        <dbReference type="ChEBI" id="CHEBI:59789"/>
    </ligand>
</feature>
<feature type="binding site" evidence="1">
    <location>
        <begin position="301"/>
        <end position="303"/>
    </location>
    <ligand>
        <name>S-adenosyl-L-methionine</name>
        <dbReference type="ChEBI" id="CHEBI:59789"/>
    </ligand>
</feature>
<feature type="binding site" evidence="1">
    <location>
        <position position="306"/>
    </location>
    <ligand>
        <name>S-adenosyl-L-methionine</name>
        <dbReference type="ChEBI" id="CHEBI:59789"/>
    </ligand>
</feature>
<feature type="binding site" evidence="1">
    <location>
        <begin position="331"/>
        <end position="332"/>
    </location>
    <ligand>
        <name>S-adenosyl-L-methionine</name>
        <dbReference type="ChEBI" id="CHEBI:59789"/>
    </ligand>
</feature>
<feature type="binding site" evidence="1">
    <location>
        <position position="383"/>
    </location>
    <ligand>
        <name>S-adenosyl-L-methionine</name>
        <dbReference type="ChEBI" id="CHEBI:59789"/>
    </ligand>
</feature>
<feature type="binding site" evidence="1">
    <location>
        <position position="412"/>
    </location>
    <ligand>
        <name>S-adenosyl-L-methionine</name>
        <dbReference type="ChEBI" id="CHEBI:59789"/>
    </ligand>
</feature>
<feature type="modified residue" description="Phosphoserine" evidence="1">
    <location>
        <position position="129"/>
    </location>
</feature>
<protein>
    <recommendedName>
        <fullName evidence="1">Siroheme synthase</fullName>
    </recommendedName>
    <domain>
        <recommendedName>
            <fullName evidence="1">Uroporphyrinogen-III C-methyltransferase</fullName>
            <shortName evidence="1">Urogen III methylase</shortName>
            <ecNumber evidence="1">2.1.1.107</ecNumber>
        </recommendedName>
        <alternativeName>
            <fullName evidence="1">SUMT</fullName>
        </alternativeName>
        <alternativeName>
            <fullName evidence="1">Uroporphyrinogen III methylase</fullName>
            <shortName evidence="1">UROM</shortName>
        </alternativeName>
    </domain>
    <domain>
        <recommendedName>
            <fullName evidence="1">Precorrin-2 dehydrogenase</fullName>
            <ecNumber evidence="1">1.3.1.76</ecNumber>
        </recommendedName>
    </domain>
    <domain>
        <recommendedName>
            <fullName evidence="1">Sirohydrochlorin ferrochelatase</fullName>
            <ecNumber evidence="1">4.99.1.4</ecNumber>
        </recommendedName>
    </domain>
</protein>
<name>CYSG_ACIAD</name>
<sequence length="457" mass="50431">MEIFPISLKLQQQRCLIVGGGHIAYRKAILLVKAGAILDIVAPDIDPQLMSLIEQSAGTAYVKLFEDHDLDRVYRLVIAATDNADVNKRVFEQAELRNLLVNSVDDIPNCRFMVPAIIDRSPLLISVASNGASPVLSRQLRTQIETLVPHGMGKLAEFSGQWRSRVKAQITNPDERRIFWEELYASPLKEQVFNDNLDIANQMMTQSLAEWTAPKGEVYLVGAGPGDPELLTLKALRLMQQADVVIYDRLVSAPILELCRRDAEKVYVGKARSNHSVPQEGINALLVKYAQAGKRVCRLKGGDPFIFGRGGEEIQELFAAGIPFQVVPGITAASGCSAYAGIPLTHRDYAQSVRFLTGHLKEGSPELPWSELVYENQTLVLYMGLVGLEHICQQLIAHGQRPDMPVALVSKGTTPEQKVVVGTLSNIASKIAEYQIHAPTLTIIGEVVSLREQLQWL</sequence>
<gene>
    <name evidence="1" type="primary">cysG</name>
    <name type="ordered locus">ACIAD2934</name>
</gene>